<protein>
    <recommendedName>
        <fullName evidence="1">Flagellar transcriptional regulator FlhD</fullName>
    </recommendedName>
</protein>
<proteinExistence type="inferred from homology"/>
<reference key="1">
    <citation type="submission" date="2008-05" db="EMBL/GenBank/DDBJ databases">
        <title>Complete sequence of chromosome 2 of Ralstonia pickettii 12J.</title>
        <authorList>
            <person name="Lucas S."/>
            <person name="Copeland A."/>
            <person name="Lapidus A."/>
            <person name="Glavina del Rio T."/>
            <person name="Dalin E."/>
            <person name="Tice H."/>
            <person name="Bruce D."/>
            <person name="Goodwin L."/>
            <person name="Pitluck S."/>
            <person name="Meincke L."/>
            <person name="Brettin T."/>
            <person name="Detter J.C."/>
            <person name="Han C."/>
            <person name="Kuske C.R."/>
            <person name="Schmutz J."/>
            <person name="Larimer F."/>
            <person name="Land M."/>
            <person name="Hauser L."/>
            <person name="Kyrpides N."/>
            <person name="Mikhailova N."/>
            <person name="Marsh T."/>
            <person name="Richardson P."/>
        </authorList>
    </citation>
    <scope>NUCLEOTIDE SEQUENCE [LARGE SCALE GENOMIC DNA]</scope>
    <source>
        <strain>12J</strain>
    </source>
</reference>
<evidence type="ECO:0000255" key="1">
    <source>
        <dbReference type="HAMAP-Rule" id="MF_00725"/>
    </source>
</evidence>
<accession>B2UHU5</accession>
<name>FLHD_RALPJ</name>
<sequence length="105" mass="11820">MDTQDIVSEISELNLTYLMLAQQMLAKDRDAALFRLGISEELADILLTMSPAQIVKLASTNMMLCRFRFDDHAILGLVTQPHRDKGLQQSQMSILLARQAVEQIS</sequence>
<feature type="chain" id="PRO_1000132691" description="Flagellar transcriptional regulator FlhD">
    <location>
        <begin position="1"/>
        <end position="105"/>
    </location>
</feature>
<feature type="disulfide bond" description="Interchain" evidence="1">
    <location>
        <position position="65"/>
    </location>
</feature>
<comment type="function">
    <text evidence="1">Functions in complex with FlhC as a master transcriptional regulator that regulates transcription of several flagellar and non-flagellar operons by binding to their promoter region. Activates expression of class 2 flagellar genes, including fliA, which is a flagellum-specific sigma factor that turns on the class 3 genes. Also regulates genes whose products function in a variety of physiological pathways.</text>
</comment>
<comment type="subunit">
    <text evidence="1">Homodimer; disulfide-linked. Forms a heterohexamer composed of two FlhC and four FlhD subunits. Each FlhC binds a FlhD dimer, forming a heterotrimer, and a hexamer assembles by dimerization of two heterotrimers.</text>
</comment>
<comment type="subcellular location">
    <subcellularLocation>
        <location evidence="1">Cytoplasm</location>
    </subcellularLocation>
</comment>
<comment type="domain">
    <text evidence="1">The C-terminal region contains a putative helix-turn-helix (HTH) motif, suggesting that this region may bind DNA.</text>
</comment>
<comment type="similarity">
    <text evidence="1">Belongs to the FlhD family.</text>
</comment>
<keyword id="KW-0010">Activator</keyword>
<keyword id="KW-1005">Bacterial flagellum biogenesis</keyword>
<keyword id="KW-0963">Cytoplasm</keyword>
<keyword id="KW-1015">Disulfide bond</keyword>
<keyword id="KW-0238">DNA-binding</keyword>
<keyword id="KW-0804">Transcription</keyword>
<keyword id="KW-0805">Transcription regulation</keyword>
<organism>
    <name type="scientific">Ralstonia pickettii (strain 12J)</name>
    <dbReference type="NCBI Taxonomy" id="402626"/>
    <lineage>
        <taxon>Bacteria</taxon>
        <taxon>Pseudomonadati</taxon>
        <taxon>Pseudomonadota</taxon>
        <taxon>Betaproteobacteria</taxon>
        <taxon>Burkholderiales</taxon>
        <taxon>Burkholderiaceae</taxon>
        <taxon>Ralstonia</taxon>
    </lineage>
</organism>
<gene>
    <name evidence="1" type="primary">flhD</name>
    <name type="ordered locus">Rpic_4043</name>
</gene>
<dbReference type="EMBL" id="CP001069">
    <property type="protein sequence ID" value="ACD29146.1"/>
    <property type="molecule type" value="Genomic_DNA"/>
</dbReference>
<dbReference type="SMR" id="B2UHU5"/>
<dbReference type="STRING" id="402626.Rpic_4043"/>
<dbReference type="KEGG" id="rpi:Rpic_4043"/>
<dbReference type="eggNOG" id="ENOG5032UUS">
    <property type="taxonomic scope" value="Bacteria"/>
</dbReference>
<dbReference type="HOGENOM" id="CLU_144160_1_0_4"/>
<dbReference type="GO" id="GO:0005737">
    <property type="term" value="C:cytoplasm"/>
    <property type="evidence" value="ECO:0007669"/>
    <property type="project" value="UniProtKB-SubCell"/>
</dbReference>
<dbReference type="GO" id="GO:0003677">
    <property type="term" value="F:DNA binding"/>
    <property type="evidence" value="ECO:0007669"/>
    <property type="project" value="UniProtKB-UniRule"/>
</dbReference>
<dbReference type="GO" id="GO:0044780">
    <property type="term" value="P:bacterial-type flagellum assembly"/>
    <property type="evidence" value="ECO:0007669"/>
    <property type="project" value="InterPro"/>
</dbReference>
<dbReference type="GO" id="GO:0045893">
    <property type="term" value="P:positive regulation of DNA-templated transcription"/>
    <property type="evidence" value="ECO:0007669"/>
    <property type="project" value="InterPro"/>
</dbReference>
<dbReference type="GO" id="GO:1902208">
    <property type="term" value="P:regulation of bacterial-type flagellum assembly"/>
    <property type="evidence" value="ECO:0007669"/>
    <property type="project" value="UniProtKB-UniRule"/>
</dbReference>
<dbReference type="Gene3D" id="1.10.4000.10">
    <property type="entry name" value="Flagellar transcriptional activator FlhD"/>
    <property type="match status" value="1"/>
</dbReference>
<dbReference type="HAMAP" id="MF_00725">
    <property type="entry name" value="FlhD"/>
    <property type="match status" value="1"/>
</dbReference>
<dbReference type="InterPro" id="IPR023559">
    <property type="entry name" value="Flagellar_FlhD"/>
</dbReference>
<dbReference type="InterPro" id="IPR036194">
    <property type="entry name" value="FlhD_sf"/>
</dbReference>
<dbReference type="NCBIfam" id="NF002783">
    <property type="entry name" value="PRK02909.1-1"/>
    <property type="match status" value="1"/>
</dbReference>
<dbReference type="Pfam" id="PF05247">
    <property type="entry name" value="FlhD"/>
    <property type="match status" value="1"/>
</dbReference>
<dbReference type="SUPFAM" id="SSF63592">
    <property type="entry name" value="Flagellar transcriptional activator FlhD"/>
    <property type="match status" value="1"/>
</dbReference>